<keyword id="KW-0067">ATP-binding</keyword>
<keyword id="KW-0319">Glycerol metabolism</keyword>
<keyword id="KW-0418">Kinase</keyword>
<keyword id="KW-0547">Nucleotide-binding</keyword>
<keyword id="KW-0808">Transferase</keyword>
<reference key="1">
    <citation type="journal article" date="2009" name="PLoS Pathog.">
        <title>Molecular evolutionary consequences of niche restriction in Francisella tularensis, a facultative intracellular pathogen.</title>
        <authorList>
            <person name="Larsson P."/>
            <person name="Elfsmark D."/>
            <person name="Svensson K."/>
            <person name="Wikstroem P."/>
            <person name="Forsman M."/>
            <person name="Brettin T."/>
            <person name="Keim P."/>
            <person name="Johansson A."/>
        </authorList>
    </citation>
    <scope>NUCLEOTIDE SEQUENCE [LARGE SCALE GENOMIC DNA]</scope>
    <source>
        <strain>FSC147</strain>
    </source>
</reference>
<organism>
    <name type="scientific">Francisella tularensis subsp. mediasiatica (strain FSC147)</name>
    <dbReference type="NCBI Taxonomy" id="441952"/>
    <lineage>
        <taxon>Bacteria</taxon>
        <taxon>Pseudomonadati</taxon>
        <taxon>Pseudomonadota</taxon>
        <taxon>Gammaproteobacteria</taxon>
        <taxon>Thiotrichales</taxon>
        <taxon>Francisellaceae</taxon>
        <taxon>Francisella</taxon>
    </lineage>
</organism>
<feature type="chain" id="PRO_1000098731" description="Glycerol kinase">
    <location>
        <begin position="1"/>
        <end position="502"/>
    </location>
</feature>
<feature type="binding site" evidence="1">
    <location>
        <position position="13"/>
    </location>
    <ligand>
        <name>ADP</name>
        <dbReference type="ChEBI" id="CHEBI:456216"/>
    </ligand>
</feature>
<feature type="binding site" evidence="1">
    <location>
        <position position="13"/>
    </location>
    <ligand>
        <name>ATP</name>
        <dbReference type="ChEBI" id="CHEBI:30616"/>
    </ligand>
</feature>
<feature type="binding site" evidence="1">
    <location>
        <position position="13"/>
    </location>
    <ligand>
        <name>sn-glycerol 3-phosphate</name>
        <dbReference type="ChEBI" id="CHEBI:57597"/>
    </ligand>
</feature>
<feature type="binding site" evidence="1">
    <location>
        <position position="14"/>
    </location>
    <ligand>
        <name>ATP</name>
        <dbReference type="ChEBI" id="CHEBI:30616"/>
    </ligand>
</feature>
<feature type="binding site" evidence="1">
    <location>
        <position position="15"/>
    </location>
    <ligand>
        <name>ATP</name>
        <dbReference type="ChEBI" id="CHEBI:30616"/>
    </ligand>
</feature>
<feature type="binding site" evidence="1">
    <location>
        <position position="17"/>
    </location>
    <ligand>
        <name>ADP</name>
        <dbReference type="ChEBI" id="CHEBI:456216"/>
    </ligand>
</feature>
<feature type="binding site" evidence="1">
    <location>
        <position position="83"/>
    </location>
    <ligand>
        <name>glycerol</name>
        <dbReference type="ChEBI" id="CHEBI:17754"/>
    </ligand>
</feature>
<feature type="binding site" evidence="1">
    <location>
        <position position="83"/>
    </location>
    <ligand>
        <name>sn-glycerol 3-phosphate</name>
        <dbReference type="ChEBI" id="CHEBI:57597"/>
    </ligand>
</feature>
<feature type="binding site" evidence="1">
    <location>
        <position position="84"/>
    </location>
    <ligand>
        <name>glycerol</name>
        <dbReference type="ChEBI" id="CHEBI:17754"/>
    </ligand>
</feature>
<feature type="binding site" evidence="1">
    <location>
        <position position="84"/>
    </location>
    <ligand>
        <name>sn-glycerol 3-phosphate</name>
        <dbReference type="ChEBI" id="CHEBI:57597"/>
    </ligand>
</feature>
<feature type="binding site" evidence="1">
    <location>
        <position position="136"/>
    </location>
    <ligand>
        <name>glycerol</name>
        <dbReference type="ChEBI" id="CHEBI:17754"/>
    </ligand>
</feature>
<feature type="binding site" evidence="1">
    <location>
        <position position="136"/>
    </location>
    <ligand>
        <name>sn-glycerol 3-phosphate</name>
        <dbReference type="ChEBI" id="CHEBI:57597"/>
    </ligand>
</feature>
<feature type="binding site" evidence="1">
    <location>
        <position position="246"/>
    </location>
    <ligand>
        <name>glycerol</name>
        <dbReference type="ChEBI" id="CHEBI:17754"/>
    </ligand>
</feature>
<feature type="binding site" evidence="1">
    <location>
        <position position="246"/>
    </location>
    <ligand>
        <name>sn-glycerol 3-phosphate</name>
        <dbReference type="ChEBI" id="CHEBI:57597"/>
    </ligand>
</feature>
<feature type="binding site" evidence="1">
    <location>
        <position position="247"/>
    </location>
    <ligand>
        <name>glycerol</name>
        <dbReference type="ChEBI" id="CHEBI:17754"/>
    </ligand>
</feature>
<feature type="binding site" evidence="1">
    <location>
        <position position="268"/>
    </location>
    <ligand>
        <name>ADP</name>
        <dbReference type="ChEBI" id="CHEBI:456216"/>
    </ligand>
</feature>
<feature type="binding site" evidence="1">
    <location>
        <position position="268"/>
    </location>
    <ligand>
        <name>ATP</name>
        <dbReference type="ChEBI" id="CHEBI:30616"/>
    </ligand>
</feature>
<feature type="binding site" evidence="1">
    <location>
        <position position="311"/>
    </location>
    <ligand>
        <name>ADP</name>
        <dbReference type="ChEBI" id="CHEBI:456216"/>
    </ligand>
</feature>
<feature type="binding site" evidence="1">
    <location>
        <position position="311"/>
    </location>
    <ligand>
        <name>ATP</name>
        <dbReference type="ChEBI" id="CHEBI:30616"/>
    </ligand>
</feature>
<feature type="binding site" evidence="1">
    <location>
        <position position="315"/>
    </location>
    <ligand>
        <name>ATP</name>
        <dbReference type="ChEBI" id="CHEBI:30616"/>
    </ligand>
</feature>
<feature type="binding site" evidence="1">
    <location>
        <position position="412"/>
    </location>
    <ligand>
        <name>ADP</name>
        <dbReference type="ChEBI" id="CHEBI:456216"/>
    </ligand>
</feature>
<feature type="binding site" evidence="1">
    <location>
        <position position="412"/>
    </location>
    <ligand>
        <name>ATP</name>
        <dbReference type="ChEBI" id="CHEBI:30616"/>
    </ligand>
</feature>
<feature type="binding site" evidence="1">
    <location>
        <position position="416"/>
    </location>
    <ligand>
        <name>ADP</name>
        <dbReference type="ChEBI" id="CHEBI:456216"/>
    </ligand>
</feature>
<comment type="function">
    <text evidence="1">Key enzyme in the regulation of glycerol uptake and metabolism. Catalyzes the phosphorylation of glycerol to yield sn-glycerol 3-phosphate.</text>
</comment>
<comment type="catalytic activity">
    <reaction evidence="1">
        <text>glycerol + ATP = sn-glycerol 3-phosphate + ADP + H(+)</text>
        <dbReference type="Rhea" id="RHEA:21644"/>
        <dbReference type="ChEBI" id="CHEBI:15378"/>
        <dbReference type="ChEBI" id="CHEBI:17754"/>
        <dbReference type="ChEBI" id="CHEBI:30616"/>
        <dbReference type="ChEBI" id="CHEBI:57597"/>
        <dbReference type="ChEBI" id="CHEBI:456216"/>
        <dbReference type="EC" id="2.7.1.30"/>
    </reaction>
</comment>
<comment type="activity regulation">
    <text evidence="1">Inhibited by fructose 1,6-bisphosphate (FBP).</text>
</comment>
<comment type="pathway">
    <text evidence="1">Polyol metabolism; glycerol degradation via glycerol kinase pathway; sn-glycerol 3-phosphate from glycerol: step 1/1.</text>
</comment>
<comment type="similarity">
    <text evidence="1">Belongs to the FGGY kinase family.</text>
</comment>
<sequence>MSKDFILAVDQGTTSSRAIIFDKKGNIRKIAQKEFTQIYPKSGWVEHDAMEIWGTQSGVMREALEFGRVKPDQIAAIGITNQRETVIVWDKETGDPVYNAIVWQCRRTSSICDEIKRDPQFVKYIKENTGLVVDAYFSGTKVKWILDNVEGAREKANAGKLLMGTIDTWLIWNLTRGKVHATDYSNASRTMLFNINSLEWDKKILDYLNIPESMLPEVKNSSEVFGVTDSHTLGGAEIPIAGVAGDQHAALFGHCCFEKGMAKNTYGTGCFALMNVGDKPVYSDEGLLTTIAWAENGKPTYALEGSVFIAGAVIQWIRDGLGLVRSAEDSEYYATKIDSTNGVYLVPAFVGLGTPYWDMYARGTIVGITRDTKREHIIRAALEAIAYQAKDVLECMKEDTGLDLAGLRVDGGAVQNNFLMQFQSDILQSEISKPKINEITGLGAVFLAGLAVGFWKDKQELKSILTTEKVFEPQKDSQAVAHDYRGWKKAVERSKAWAECYS</sequence>
<dbReference type="EC" id="2.7.1.30" evidence="1"/>
<dbReference type="EMBL" id="CP000915">
    <property type="protein sequence ID" value="ACD30277.1"/>
    <property type="molecule type" value="Genomic_DNA"/>
</dbReference>
<dbReference type="SMR" id="B2SF32"/>
<dbReference type="KEGG" id="ftm:FTM_0192"/>
<dbReference type="HOGENOM" id="CLU_009281_2_3_6"/>
<dbReference type="UniPathway" id="UPA00618">
    <property type="reaction ID" value="UER00672"/>
</dbReference>
<dbReference type="GO" id="GO:0005829">
    <property type="term" value="C:cytosol"/>
    <property type="evidence" value="ECO:0007669"/>
    <property type="project" value="TreeGrafter"/>
</dbReference>
<dbReference type="GO" id="GO:0005524">
    <property type="term" value="F:ATP binding"/>
    <property type="evidence" value="ECO:0007669"/>
    <property type="project" value="UniProtKB-UniRule"/>
</dbReference>
<dbReference type="GO" id="GO:0004370">
    <property type="term" value="F:glycerol kinase activity"/>
    <property type="evidence" value="ECO:0000250"/>
    <property type="project" value="UniProtKB"/>
</dbReference>
<dbReference type="GO" id="GO:0019563">
    <property type="term" value="P:glycerol catabolic process"/>
    <property type="evidence" value="ECO:0007669"/>
    <property type="project" value="UniProtKB-UniRule"/>
</dbReference>
<dbReference type="GO" id="GO:0006071">
    <property type="term" value="P:glycerol metabolic process"/>
    <property type="evidence" value="ECO:0000250"/>
    <property type="project" value="UniProtKB"/>
</dbReference>
<dbReference type="GO" id="GO:0006072">
    <property type="term" value="P:glycerol-3-phosphate metabolic process"/>
    <property type="evidence" value="ECO:0007669"/>
    <property type="project" value="InterPro"/>
</dbReference>
<dbReference type="CDD" id="cd07786">
    <property type="entry name" value="FGGY_EcGK_like"/>
    <property type="match status" value="1"/>
</dbReference>
<dbReference type="FunFam" id="3.30.420.40:FF:000007">
    <property type="entry name" value="Glycerol kinase"/>
    <property type="match status" value="1"/>
</dbReference>
<dbReference type="FunFam" id="3.30.420.40:FF:000008">
    <property type="entry name" value="Glycerol kinase"/>
    <property type="match status" value="1"/>
</dbReference>
<dbReference type="Gene3D" id="3.30.420.40">
    <property type="match status" value="2"/>
</dbReference>
<dbReference type="HAMAP" id="MF_00186">
    <property type="entry name" value="Glycerol_kin"/>
    <property type="match status" value="1"/>
</dbReference>
<dbReference type="InterPro" id="IPR043129">
    <property type="entry name" value="ATPase_NBD"/>
</dbReference>
<dbReference type="InterPro" id="IPR000577">
    <property type="entry name" value="Carb_kinase_FGGY"/>
</dbReference>
<dbReference type="InterPro" id="IPR018483">
    <property type="entry name" value="Carb_kinase_FGGY_CS"/>
</dbReference>
<dbReference type="InterPro" id="IPR018485">
    <property type="entry name" value="FGGY_C"/>
</dbReference>
<dbReference type="InterPro" id="IPR018484">
    <property type="entry name" value="FGGY_N"/>
</dbReference>
<dbReference type="InterPro" id="IPR005999">
    <property type="entry name" value="Glycerol_kin"/>
</dbReference>
<dbReference type="NCBIfam" id="TIGR01311">
    <property type="entry name" value="glycerol_kin"/>
    <property type="match status" value="1"/>
</dbReference>
<dbReference type="NCBIfam" id="NF000756">
    <property type="entry name" value="PRK00047.1"/>
    <property type="match status" value="1"/>
</dbReference>
<dbReference type="PANTHER" id="PTHR10196:SF69">
    <property type="entry name" value="GLYCEROL KINASE"/>
    <property type="match status" value="1"/>
</dbReference>
<dbReference type="PANTHER" id="PTHR10196">
    <property type="entry name" value="SUGAR KINASE"/>
    <property type="match status" value="1"/>
</dbReference>
<dbReference type="Pfam" id="PF02782">
    <property type="entry name" value="FGGY_C"/>
    <property type="match status" value="1"/>
</dbReference>
<dbReference type="Pfam" id="PF00370">
    <property type="entry name" value="FGGY_N"/>
    <property type="match status" value="1"/>
</dbReference>
<dbReference type="PIRSF" id="PIRSF000538">
    <property type="entry name" value="GlpK"/>
    <property type="match status" value="1"/>
</dbReference>
<dbReference type="SUPFAM" id="SSF53067">
    <property type="entry name" value="Actin-like ATPase domain"/>
    <property type="match status" value="2"/>
</dbReference>
<dbReference type="PROSITE" id="PS00933">
    <property type="entry name" value="FGGY_KINASES_1"/>
    <property type="match status" value="1"/>
</dbReference>
<dbReference type="PROSITE" id="PS00445">
    <property type="entry name" value="FGGY_KINASES_2"/>
    <property type="match status" value="1"/>
</dbReference>
<name>GLPK_FRATM</name>
<protein>
    <recommendedName>
        <fullName evidence="1">Glycerol kinase</fullName>
        <ecNumber evidence="1">2.7.1.30</ecNumber>
    </recommendedName>
    <alternativeName>
        <fullName evidence="1">ATP:glycerol 3-phosphotransferase</fullName>
    </alternativeName>
    <alternativeName>
        <fullName evidence="1">Glycerokinase</fullName>
        <shortName evidence="1">GK</shortName>
    </alternativeName>
</protein>
<gene>
    <name evidence="1" type="primary">glpK</name>
    <name type="ordered locus">FTM_0192</name>
</gene>
<proteinExistence type="inferred from homology"/>
<accession>B2SF32</accession>
<evidence type="ECO:0000255" key="1">
    <source>
        <dbReference type="HAMAP-Rule" id="MF_00186"/>
    </source>
</evidence>